<reference key="1">
    <citation type="journal article" date="1997" name="J. Biol. Chem.">
        <title>Vam2/Vps41p and Vam6/Vps39p are components of a protein complex on the vacuolar membranes and involved in the vacuolar assembly in the yeast Saccharomyces cerevisiae.</title>
        <authorList>
            <person name="Nakamura N."/>
            <person name="Hirata A."/>
            <person name="Ohsumi Y."/>
            <person name="Wada Y."/>
        </authorList>
    </citation>
    <scope>NUCLEOTIDE SEQUENCE [GENOMIC DNA]</scope>
</reference>
<reference key="2">
    <citation type="journal article" date="1997" name="Nature">
        <title>The nucleotide sequence of Saccharomyces cerevisiae chromosome IV.</title>
        <authorList>
            <person name="Jacq C."/>
            <person name="Alt-Moerbe J."/>
            <person name="Andre B."/>
            <person name="Arnold W."/>
            <person name="Bahr A."/>
            <person name="Ballesta J.P.G."/>
            <person name="Bargues M."/>
            <person name="Baron L."/>
            <person name="Becker A."/>
            <person name="Biteau N."/>
            <person name="Bloecker H."/>
            <person name="Blugeon C."/>
            <person name="Boskovic J."/>
            <person name="Brandt P."/>
            <person name="Brueckner M."/>
            <person name="Buitrago M.J."/>
            <person name="Coster F."/>
            <person name="Delaveau T."/>
            <person name="del Rey F."/>
            <person name="Dujon B."/>
            <person name="Eide L.G."/>
            <person name="Garcia-Cantalejo J.M."/>
            <person name="Goffeau A."/>
            <person name="Gomez-Peris A."/>
            <person name="Granotier C."/>
            <person name="Hanemann V."/>
            <person name="Hankeln T."/>
            <person name="Hoheisel J.D."/>
            <person name="Jaeger W."/>
            <person name="Jimenez A."/>
            <person name="Jonniaux J.-L."/>
            <person name="Kraemer C."/>
            <person name="Kuester H."/>
            <person name="Laamanen P."/>
            <person name="Legros Y."/>
            <person name="Louis E.J."/>
            <person name="Moeller-Rieker S."/>
            <person name="Monnet A."/>
            <person name="Moro M."/>
            <person name="Mueller-Auer S."/>
            <person name="Nussbaumer B."/>
            <person name="Paricio N."/>
            <person name="Paulin L."/>
            <person name="Perea J."/>
            <person name="Perez-Alonso M."/>
            <person name="Perez-Ortin J.E."/>
            <person name="Pohl T.M."/>
            <person name="Prydz H."/>
            <person name="Purnelle B."/>
            <person name="Rasmussen S.W."/>
            <person name="Remacha M.A."/>
            <person name="Revuelta J.L."/>
            <person name="Rieger M."/>
            <person name="Salom D."/>
            <person name="Saluz H.P."/>
            <person name="Saiz J.E."/>
            <person name="Saren A.-M."/>
            <person name="Schaefer M."/>
            <person name="Scharfe M."/>
            <person name="Schmidt E.R."/>
            <person name="Schneider C."/>
            <person name="Scholler P."/>
            <person name="Schwarz S."/>
            <person name="Soler-Mira A."/>
            <person name="Urrestarazu L.A."/>
            <person name="Verhasselt P."/>
            <person name="Vissers S."/>
            <person name="Voet M."/>
            <person name="Volckaert G."/>
            <person name="Wagner G."/>
            <person name="Wambutt R."/>
            <person name="Wedler E."/>
            <person name="Wedler H."/>
            <person name="Woelfl S."/>
            <person name="Harris D.E."/>
            <person name="Bowman S."/>
            <person name="Brown D."/>
            <person name="Churcher C.M."/>
            <person name="Connor R."/>
            <person name="Dedman K."/>
            <person name="Gentles S."/>
            <person name="Hamlin N."/>
            <person name="Hunt S."/>
            <person name="Jones L."/>
            <person name="McDonald S."/>
            <person name="Murphy L.D."/>
            <person name="Niblett D."/>
            <person name="Odell C."/>
            <person name="Oliver K."/>
            <person name="Rajandream M.A."/>
            <person name="Richards C."/>
            <person name="Shore L."/>
            <person name="Walsh S.V."/>
            <person name="Barrell B.G."/>
            <person name="Dietrich F.S."/>
            <person name="Mulligan J.T."/>
            <person name="Allen E."/>
            <person name="Araujo R."/>
            <person name="Aviles E."/>
            <person name="Berno A."/>
            <person name="Carpenter J."/>
            <person name="Chen E."/>
            <person name="Cherry J.M."/>
            <person name="Chung E."/>
            <person name="Duncan M."/>
            <person name="Hunicke-Smith S."/>
            <person name="Hyman R.W."/>
            <person name="Komp C."/>
            <person name="Lashkari D."/>
            <person name="Lew H."/>
            <person name="Lin D."/>
            <person name="Mosedale D."/>
            <person name="Nakahara K."/>
            <person name="Namath A."/>
            <person name="Oefner P."/>
            <person name="Oh C."/>
            <person name="Petel F.X."/>
            <person name="Roberts D."/>
            <person name="Schramm S."/>
            <person name="Schroeder M."/>
            <person name="Shogren T."/>
            <person name="Shroff N."/>
            <person name="Winant A."/>
            <person name="Yelton M.A."/>
            <person name="Botstein D."/>
            <person name="Davis R.W."/>
            <person name="Johnston M."/>
            <person name="Andrews S."/>
            <person name="Brinkman R."/>
            <person name="Cooper J."/>
            <person name="Ding H."/>
            <person name="Du Z."/>
            <person name="Favello A."/>
            <person name="Fulton L."/>
            <person name="Gattung S."/>
            <person name="Greco T."/>
            <person name="Hallsworth K."/>
            <person name="Hawkins J."/>
            <person name="Hillier L.W."/>
            <person name="Jier M."/>
            <person name="Johnson D."/>
            <person name="Johnston L."/>
            <person name="Kirsten J."/>
            <person name="Kucaba T."/>
            <person name="Langston Y."/>
            <person name="Latreille P."/>
            <person name="Le T."/>
            <person name="Mardis E."/>
            <person name="Menezes S."/>
            <person name="Miller N."/>
            <person name="Nhan M."/>
            <person name="Pauley A."/>
            <person name="Peluso D."/>
            <person name="Rifkin L."/>
            <person name="Riles L."/>
            <person name="Taich A."/>
            <person name="Trevaskis E."/>
            <person name="Vignati D."/>
            <person name="Wilcox L."/>
            <person name="Wohldman P."/>
            <person name="Vaudin M."/>
            <person name="Wilson R."/>
            <person name="Waterston R."/>
            <person name="Albermann K."/>
            <person name="Hani J."/>
            <person name="Heumann K."/>
            <person name="Kleine K."/>
            <person name="Mewes H.-W."/>
            <person name="Zollner A."/>
            <person name="Zaccaria P."/>
        </authorList>
    </citation>
    <scope>NUCLEOTIDE SEQUENCE [LARGE SCALE GENOMIC DNA]</scope>
    <source>
        <strain>ATCC 204508 / S288c</strain>
    </source>
</reference>
<reference key="3">
    <citation type="journal article" date="2014" name="G3 (Bethesda)">
        <title>The reference genome sequence of Saccharomyces cerevisiae: Then and now.</title>
        <authorList>
            <person name="Engel S.R."/>
            <person name="Dietrich F.S."/>
            <person name="Fisk D.G."/>
            <person name="Binkley G."/>
            <person name="Balakrishnan R."/>
            <person name="Costanzo M.C."/>
            <person name="Dwight S.S."/>
            <person name="Hitz B.C."/>
            <person name="Karra K."/>
            <person name="Nash R.S."/>
            <person name="Weng S."/>
            <person name="Wong E.D."/>
            <person name="Lloyd P."/>
            <person name="Skrzypek M.S."/>
            <person name="Miyasato S.R."/>
            <person name="Simison M."/>
            <person name="Cherry J.M."/>
        </authorList>
    </citation>
    <scope>GENOME REANNOTATION</scope>
    <source>
        <strain>ATCC 204508 / S288c</strain>
    </source>
</reference>
<reference key="4">
    <citation type="journal article" date="2003" name="Nature">
        <title>Global analysis of protein expression in yeast.</title>
        <authorList>
            <person name="Ghaemmaghami S."/>
            <person name="Huh W.-K."/>
            <person name="Bower K."/>
            <person name="Howson R.W."/>
            <person name="Belle A."/>
            <person name="Dephoure N."/>
            <person name="O'Shea E.K."/>
            <person name="Weissman J.S."/>
        </authorList>
    </citation>
    <scope>LEVEL OF PROTEIN EXPRESSION [LARGE SCALE ANALYSIS]</scope>
</reference>
<reference key="5">
    <citation type="journal article" date="2006" name="EMBO J.">
        <title>Purification of active HOPS complex reveals its affinities for phosphoinositides and the SNARE Vam7p.</title>
        <authorList>
            <person name="Stroupe C."/>
            <person name="Collins K.M."/>
            <person name="Fratti R.A."/>
            <person name="Wickner W."/>
        </authorList>
    </citation>
    <scope>IDENTIFICATION IN THE HOPS COMPLEX</scope>
    <scope>FUNCTION OF THE HOPS COMPLEX</scope>
    <scope>INTERACTION WITH VAM7</scope>
</reference>
<reference key="6">
    <citation type="journal article" date="2009" name="Science">
        <title>Global analysis of Cdk1 substrate phosphorylation sites provides insights into evolution.</title>
        <authorList>
            <person name="Holt L.J."/>
            <person name="Tuch B.B."/>
            <person name="Villen J."/>
            <person name="Johnson A.D."/>
            <person name="Gygi S.P."/>
            <person name="Morgan D.O."/>
        </authorList>
    </citation>
    <scope>IDENTIFICATION BY MASS SPECTROMETRY [LARGE SCALE ANALYSIS]</scope>
</reference>
<reference key="7">
    <citation type="journal article" date="2020" name="J. Cell Sci.">
        <title>Amino acid homeostatic control by TORC1 in Saccharomyces cerevisiae under high hydrostatic pressure.</title>
        <authorList>
            <person name="Uemura S."/>
            <person name="Mochizuki T."/>
            <person name="Amemiya K."/>
            <person name="Kurosaka G."/>
            <person name="Yazawa M."/>
            <person name="Nakamoto K."/>
            <person name="Ishikawa Y."/>
            <person name="Izawa S."/>
            <person name="Abe F."/>
        </authorList>
    </citation>
    <scope>DISRUPTION PHENOTYPE</scope>
</reference>
<gene>
    <name type="primary">VAM6</name>
    <name type="synonym">CVT4</name>
    <name type="synonym">VPL18</name>
    <name type="synonym">VPL22</name>
    <name type="synonym">VPS39</name>
    <name type="ordered locus">YDL077C</name>
</gene>
<feature type="chain" id="PRO_0000065903" description="Vacuolar morphogenesis protein 6">
    <location>
        <begin position="1"/>
        <end position="1049"/>
    </location>
</feature>
<feature type="repeat" description="CHCR">
    <location>
        <begin position="730"/>
        <end position="896"/>
    </location>
</feature>
<proteinExistence type="evidence at protein level"/>
<dbReference type="EMBL" id="Z74125">
    <property type="protein sequence ID" value="CAA98643.1"/>
    <property type="molecule type" value="Genomic_DNA"/>
</dbReference>
<dbReference type="EMBL" id="D83058">
    <property type="protein sequence ID" value="BAA11758.1"/>
    <property type="molecule type" value="Genomic_DNA"/>
</dbReference>
<dbReference type="EMBL" id="BK006938">
    <property type="protein sequence ID" value="DAA11782.1"/>
    <property type="molecule type" value="Genomic_DNA"/>
</dbReference>
<dbReference type="PIR" id="S67613">
    <property type="entry name" value="S67613"/>
</dbReference>
<dbReference type="RefSeq" id="NP_010206.1">
    <property type="nucleotide sequence ID" value="NM_001180136.1"/>
</dbReference>
<dbReference type="PDB" id="7ZU0">
    <property type="method" value="EM"/>
    <property type="resolution" value="4.40 A"/>
    <property type="chains" value="E=1-1049"/>
</dbReference>
<dbReference type="PDBsum" id="7ZU0"/>
<dbReference type="EMDB" id="EMD-14964"/>
<dbReference type="EMDB" id="EMD-2280"/>
<dbReference type="SMR" id="Q07468"/>
<dbReference type="BioGRID" id="31984">
    <property type="interactions" value="1279"/>
</dbReference>
<dbReference type="ComplexPortal" id="CPX-1625">
    <property type="entry name" value="HOPS tethering complex"/>
</dbReference>
<dbReference type="DIP" id="DIP-1002N"/>
<dbReference type="FunCoup" id="Q07468">
    <property type="interactions" value="794"/>
</dbReference>
<dbReference type="IntAct" id="Q07468">
    <property type="interactions" value="16"/>
</dbReference>
<dbReference type="MINT" id="Q07468"/>
<dbReference type="STRING" id="4932.YDL077C"/>
<dbReference type="iPTMnet" id="Q07468"/>
<dbReference type="PaxDb" id="4932-YDL077C"/>
<dbReference type="PeptideAtlas" id="Q07468"/>
<dbReference type="EnsemblFungi" id="YDL077C_mRNA">
    <property type="protein sequence ID" value="YDL077C"/>
    <property type="gene ID" value="YDL077C"/>
</dbReference>
<dbReference type="GeneID" id="851482"/>
<dbReference type="KEGG" id="sce:YDL077C"/>
<dbReference type="AGR" id="SGD:S000002235"/>
<dbReference type="SGD" id="S000002235">
    <property type="gene designation" value="VAM6"/>
</dbReference>
<dbReference type="VEuPathDB" id="FungiDB:YDL077C"/>
<dbReference type="eggNOG" id="KOG2063">
    <property type="taxonomic scope" value="Eukaryota"/>
</dbReference>
<dbReference type="GeneTree" id="ENSGT00530000063596"/>
<dbReference type="HOGENOM" id="CLU_293239_0_0_1"/>
<dbReference type="InParanoid" id="Q07468"/>
<dbReference type="OMA" id="FWAPPQL"/>
<dbReference type="OrthoDB" id="5325112at2759"/>
<dbReference type="BioCyc" id="YEAST:G3O-29488-MONOMER"/>
<dbReference type="BioGRID-ORCS" id="851482">
    <property type="hits" value="0 hits in 10 CRISPR screens"/>
</dbReference>
<dbReference type="PRO" id="PR:Q07468"/>
<dbReference type="Proteomes" id="UP000002311">
    <property type="component" value="Chromosome IV"/>
</dbReference>
<dbReference type="RNAct" id="Q07468">
    <property type="molecule type" value="protein"/>
</dbReference>
<dbReference type="GO" id="GO:0005737">
    <property type="term" value="C:cytoplasm"/>
    <property type="evidence" value="ECO:0000318"/>
    <property type="project" value="GO_Central"/>
</dbReference>
<dbReference type="GO" id="GO:0000324">
    <property type="term" value="C:fungal-type vacuole"/>
    <property type="evidence" value="ECO:0000314"/>
    <property type="project" value="SGD"/>
</dbReference>
<dbReference type="GO" id="GO:0000329">
    <property type="term" value="C:fungal-type vacuole membrane"/>
    <property type="evidence" value="ECO:0000314"/>
    <property type="project" value="SGD"/>
</dbReference>
<dbReference type="GO" id="GO:0030897">
    <property type="term" value="C:HOPS complex"/>
    <property type="evidence" value="ECO:0000353"/>
    <property type="project" value="ComplexPortal"/>
</dbReference>
<dbReference type="GO" id="GO:1990816">
    <property type="term" value="C:vacuole-mitochondrion membrane contact site"/>
    <property type="evidence" value="ECO:0000314"/>
    <property type="project" value="SGD"/>
</dbReference>
<dbReference type="GO" id="GO:0005085">
    <property type="term" value="F:guanyl-nucleotide exchange factor activity"/>
    <property type="evidence" value="ECO:0000314"/>
    <property type="project" value="SGD"/>
</dbReference>
<dbReference type="GO" id="GO:0031267">
    <property type="term" value="F:small GTPase binding"/>
    <property type="evidence" value="ECO:0000353"/>
    <property type="project" value="SGD"/>
</dbReference>
<dbReference type="GO" id="GO:0006914">
    <property type="term" value="P:autophagy"/>
    <property type="evidence" value="ECO:0000318"/>
    <property type="project" value="GO_Central"/>
</dbReference>
<dbReference type="GO" id="GO:0034058">
    <property type="term" value="P:endosomal vesicle fusion"/>
    <property type="evidence" value="ECO:0000318"/>
    <property type="project" value="GO_Central"/>
</dbReference>
<dbReference type="GO" id="GO:0006886">
    <property type="term" value="P:intracellular protein transport"/>
    <property type="evidence" value="ECO:0007669"/>
    <property type="project" value="InterPro"/>
</dbReference>
<dbReference type="GO" id="GO:0034727">
    <property type="term" value="P:piecemeal microautophagy of the nucleus"/>
    <property type="evidence" value="ECO:0000315"/>
    <property type="project" value="SGD"/>
</dbReference>
<dbReference type="GO" id="GO:1904263">
    <property type="term" value="P:positive regulation of TORC1 signaling"/>
    <property type="evidence" value="ECO:0000315"/>
    <property type="project" value="SGD"/>
</dbReference>
<dbReference type="GO" id="GO:0035542">
    <property type="term" value="P:regulation of SNARE complex assembly"/>
    <property type="evidence" value="ECO:0000314"/>
    <property type="project" value="SGD"/>
</dbReference>
<dbReference type="GO" id="GO:0042144">
    <property type="term" value="P:vacuole fusion, non-autophagic"/>
    <property type="evidence" value="ECO:0000314"/>
    <property type="project" value="SGD"/>
</dbReference>
<dbReference type="GO" id="GO:0007033">
    <property type="term" value="P:vacuole organization"/>
    <property type="evidence" value="ECO:0000315"/>
    <property type="project" value="SGD"/>
</dbReference>
<dbReference type="GO" id="GO:0099022">
    <property type="term" value="P:vesicle tethering"/>
    <property type="evidence" value="ECO:0000314"/>
    <property type="project" value="SGD"/>
</dbReference>
<dbReference type="GO" id="GO:0016192">
    <property type="term" value="P:vesicle-mediated transport"/>
    <property type="evidence" value="ECO:0000315"/>
    <property type="project" value="SGD"/>
</dbReference>
<dbReference type="InterPro" id="IPR000547">
    <property type="entry name" value="Clathrin_H-chain/VPS_repeat"/>
</dbReference>
<dbReference type="InterPro" id="IPR032914">
    <property type="entry name" value="Vam6/VPS39/TRAP1"/>
</dbReference>
<dbReference type="InterPro" id="IPR019452">
    <property type="entry name" value="VPS39/TGF_beta_rcpt-assoc_1"/>
</dbReference>
<dbReference type="PANTHER" id="PTHR12894">
    <property type="entry name" value="CNH DOMAIN CONTAINING"/>
    <property type="match status" value="1"/>
</dbReference>
<dbReference type="PANTHER" id="PTHR12894:SF49">
    <property type="entry name" value="VAM6_VPS39-LIKE PROTEIN"/>
    <property type="match status" value="1"/>
</dbReference>
<dbReference type="Pfam" id="PF10366">
    <property type="entry name" value="Vps39_1"/>
    <property type="match status" value="1"/>
</dbReference>
<dbReference type="PROSITE" id="PS50236">
    <property type="entry name" value="CHCR"/>
    <property type="match status" value="1"/>
</dbReference>
<keyword id="KW-0002">3D-structure</keyword>
<keyword id="KW-0472">Membrane</keyword>
<keyword id="KW-0653">Protein transport</keyword>
<keyword id="KW-1185">Reference proteome</keyword>
<keyword id="KW-0813">Transport</keyword>
<keyword id="KW-0926">Vacuole</keyword>
<accession>Q07468</accession>
<accession>D6VRS2</accession>
<organism>
    <name type="scientific">Saccharomyces cerevisiae (strain ATCC 204508 / S288c)</name>
    <name type="common">Baker's yeast</name>
    <dbReference type="NCBI Taxonomy" id="559292"/>
    <lineage>
        <taxon>Eukaryota</taxon>
        <taxon>Fungi</taxon>
        <taxon>Dikarya</taxon>
        <taxon>Ascomycota</taxon>
        <taxon>Saccharomycotina</taxon>
        <taxon>Saccharomycetes</taxon>
        <taxon>Saccharomycetales</taxon>
        <taxon>Saccharomycetaceae</taxon>
        <taxon>Saccharomyces</taxon>
    </lineage>
</organism>
<sequence length="1049" mass="122882">MLRAQKLHSLKSSDITAILPTEQSQKLVLAKKNGDVEVYSRDGNTLKLFQVYPDLLQNAKNDPLPPVIENFYFANELSTIFAQCKETLILLSTTNLHEYDRIIDRRGINHCWLFERSHKNKEEKNTYLIYSTINTAKMRVLIWEGRTYKNMMEASLSYRKETIRSIYPGETGITLATDLGIYHWPYNKPSLIRIEKTVKNKFPKDMISALTELKEQAEKVIEKKPKKNSHFDAQSFSSMDRMSRKSSMSSLWYRTIRNERGNKIRYTFELDGNDATPMIIDGATKKIFKVELMHNNEEPFLIATDHATFSESNSEFDHMQYLSSNLLMLYNSSTIKFVDYENGFTFLQQKIPEGIKWVKNLSGTYFLVWTSNDEVQLFSYHVDDGSEDDDQESICGDINDPDFYQLWRKVLFYKFFIDSPHSKELCVSDNPEESLDICAMKLRDLTVMWCLRIFDKFQNYMVQLERSRNSRMIRSKCEEMIIKSIFDLFIKFWAPPQLVILKVFPSAISSLVLEITGQEHHCLLKEAEEVKETYDIPPHLLNRWCLPYLTDTRRHLQNLLSKENDDESRITWCYRDREIKQSFDFFLISNHDDVDLNTMLTLIDTVLFKCYLYYNPPMVGPFIRVENHCDSHVIVTELKIRHMFKDLIDFYYKRGNHEEALKFLTDLVDELENDNTDQKQRQKIDHGVKILVIYYLKKLSNPQLDVIFTYTDWLLNRHNDSIKEILSSIFFYDSQACSSRDHLKVYGYIKKFDKLLAIQYLEFAISTFRLEGNKLHTVLIKLYLENLDIPSTRIKLKSLLETTSVYEPRTILKLLNDAIESGSDQLPTNQLNFVKYLKIFPLSKLENHKEAVHILLDEIDDYKAATSYCNDVYQSDSTKGEELLLYLYSKLVSIYDSNRNSKLILNFLQDHGSKLNSAEIYKNLPQDISLYDIGRVVSQLLKKHTSKMDETRLEKALLQVELVATTYKLNERMSSYGVLSDSHKCPICKKVISNFGTDSISWFTREGRNIITHYNCGKVLQERFNAKNEKSSRIKQKTLGEVINELNNK</sequence>
<evidence type="ECO:0000269" key="1">
    <source>
    </source>
</evidence>
<evidence type="ECO:0000269" key="2">
    <source>
    </source>
</evidence>
<evidence type="ECO:0000269" key="3">
    <source>
    </source>
</evidence>
<evidence type="ECO:0000305" key="4"/>
<protein>
    <recommendedName>
        <fullName>Vacuolar morphogenesis protein 6</fullName>
    </recommendedName>
    <alternativeName>
        <fullName>Vacuolar protein sorting-associated protein 39</fullName>
    </alternativeName>
</protein>
<name>VAM6_YEAST</name>
<comment type="function">
    <text evidence="2">Required for vacuolar assembly. Acts as a component of the HOPS complex that acts during the docking stage of vacuole fusion. HOPS is an effector for the vacuolar Rab GTPase YPT7 and is required for vacuolar SNARE complex assembly. It remains bound to SNARE complexes after vacuole fusion.</text>
</comment>
<comment type="subunit">
    <text evidence="2">Component of the HOPS complex which is composed of PEP5, VPS16, PEP3, VPS33, VPS39 and VPS41. HOPS associates with phosphoinositides and the PX domain of VAM7. Interacts with VPS41 and VAM7.</text>
</comment>
<comment type="interaction">
    <interactant intactId="EBI-20422">
        <id>Q07468</id>
    </interactant>
    <interactant intactId="EBI-20395">
        <id>P20795</id>
        <label>VPS33</label>
    </interactant>
    <organismsDiffer>false</organismsDiffer>
    <experiments>7</experiments>
</comment>
<comment type="subcellular location">
    <subcellularLocation>
        <location evidence="4">Vacuole membrane</location>
        <topology evidence="4">Peripheral membrane protein</topology>
    </subcellularLocation>
</comment>
<comment type="disruption phenotype">
    <text evidence="3">Sensitive to high hydrostatic pressure (mechanical stress).</text>
</comment>
<comment type="miscellaneous">
    <text evidence="1">Present with 319 molecules/cell in log phase SD medium.</text>
</comment>
<comment type="similarity">
    <text evidence="4">Belongs to the VAM6/VPS39 family.</text>
</comment>